<evidence type="ECO:0000256" key="1">
    <source>
        <dbReference type="SAM" id="MobiDB-lite"/>
    </source>
</evidence>
<evidence type="ECO:0000269" key="2">
    <source>
    </source>
</evidence>
<evidence type="ECO:0000269" key="3">
    <source>
    </source>
</evidence>
<evidence type="ECO:0000269" key="4">
    <source>
    </source>
</evidence>
<evidence type="ECO:0000269" key="5">
    <source>
    </source>
</evidence>
<evidence type="ECO:0000269" key="6">
    <source>
    </source>
</evidence>
<evidence type="ECO:0000269" key="7">
    <source>
    </source>
</evidence>
<evidence type="ECO:0000269" key="8">
    <source>
    </source>
</evidence>
<evidence type="ECO:0000269" key="9">
    <source>
    </source>
</evidence>
<evidence type="ECO:0000269" key="10">
    <source>
    </source>
</evidence>
<evidence type="ECO:0000269" key="11">
    <source>
    </source>
</evidence>
<evidence type="ECO:0000269" key="12">
    <source>
    </source>
</evidence>
<evidence type="ECO:0000269" key="13">
    <source>
    </source>
</evidence>
<evidence type="ECO:0000303" key="14">
    <source>
    </source>
</evidence>
<evidence type="ECO:0000305" key="15"/>
<reference key="1">
    <citation type="journal article" date="1995" name="J. Biol. Chem.">
        <title>Cloning and characterization of a heterologously expressed bifunctional chorismate synthase/flavin reductase from Neurospora crassa.</title>
        <authorList>
            <person name="Henstrand J.M."/>
            <person name="Amrhein N."/>
            <person name="Schmid J."/>
        </authorList>
    </citation>
    <scope>NUCLEOTIDE SEQUENCE [MRNA]</scope>
    <scope>FUNCTION</scope>
</reference>
<reference key="2">
    <citation type="journal article" date="2003" name="Nucleic Acids Res.">
        <title>What's in the genome of a filamentous fungus? Analysis of the Neurospora genome sequence.</title>
        <authorList>
            <person name="Mannhaupt G."/>
            <person name="Montrone C."/>
            <person name="Haase D."/>
            <person name="Mewes H.-W."/>
            <person name="Aign V."/>
            <person name="Hoheisel J.D."/>
            <person name="Fartmann B."/>
            <person name="Nyakatura G."/>
            <person name="Kempken F."/>
            <person name="Maier J."/>
            <person name="Schulte U."/>
        </authorList>
    </citation>
    <scope>NUCLEOTIDE SEQUENCE [LARGE SCALE GENOMIC DNA]</scope>
    <source>
        <strain>ATCC 24698 / 74-OR23-1A / CBS 708.71 / DSM 1257 / FGSC 987</strain>
    </source>
</reference>
<reference key="3">
    <citation type="journal article" date="2003" name="Nature">
        <title>The genome sequence of the filamentous fungus Neurospora crassa.</title>
        <authorList>
            <person name="Galagan J.E."/>
            <person name="Calvo S.E."/>
            <person name="Borkovich K.A."/>
            <person name="Selker E.U."/>
            <person name="Read N.D."/>
            <person name="Jaffe D.B."/>
            <person name="FitzHugh W."/>
            <person name="Ma L.-J."/>
            <person name="Smirnov S."/>
            <person name="Purcell S."/>
            <person name="Rehman B."/>
            <person name="Elkins T."/>
            <person name="Engels R."/>
            <person name="Wang S."/>
            <person name="Nielsen C.B."/>
            <person name="Butler J."/>
            <person name="Endrizzi M."/>
            <person name="Qui D."/>
            <person name="Ianakiev P."/>
            <person name="Bell-Pedersen D."/>
            <person name="Nelson M.A."/>
            <person name="Werner-Washburne M."/>
            <person name="Selitrennikoff C.P."/>
            <person name="Kinsey J.A."/>
            <person name="Braun E.L."/>
            <person name="Zelter A."/>
            <person name="Schulte U."/>
            <person name="Kothe G.O."/>
            <person name="Jedd G."/>
            <person name="Mewes H.-W."/>
            <person name="Staben C."/>
            <person name="Marcotte E."/>
            <person name="Greenberg D."/>
            <person name="Roy A."/>
            <person name="Foley K."/>
            <person name="Naylor J."/>
            <person name="Stange-Thomann N."/>
            <person name="Barrett R."/>
            <person name="Gnerre S."/>
            <person name="Kamal M."/>
            <person name="Kamvysselis M."/>
            <person name="Mauceli E.W."/>
            <person name="Bielke C."/>
            <person name="Rudd S."/>
            <person name="Frishman D."/>
            <person name="Krystofova S."/>
            <person name="Rasmussen C."/>
            <person name="Metzenberg R.L."/>
            <person name="Perkins D.D."/>
            <person name="Kroken S."/>
            <person name="Cogoni C."/>
            <person name="Macino G."/>
            <person name="Catcheside D.E.A."/>
            <person name="Li W."/>
            <person name="Pratt R.J."/>
            <person name="Osmani S.A."/>
            <person name="DeSouza C.P.C."/>
            <person name="Glass N.L."/>
            <person name="Orbach M.J."/>
            <person name="Berglund J.A."/>
            <person name="Voelker R."/>
            <person name="Yarden O."/>
            <person name="Plamann M."/>
            <person name="Seiler S."/>
            <person name="Dunlap J.C."/>
            <person name="Radford A."/>
            <person name="Aramayo R."/>
            <person name="Natvig D.O."/>
            <person name="Alex L.A."/>
            <person name="Mannhaupt G."/>
            <person name="Ebbole D.J."/>
            <person name="Freitag M."/>
            <person name="Paulsen I."/>
            <person name="Sachs M.S."/>
            <person name="Lander E.S."/>
            <person name="Nusbaum C."/>
            <person name="Birren B.W."/>
        </authorList>
    </citation>
    <scope>NUCLEOTIDE SEQUENCE [LARGE SCALE GENOMIC DNA]</scope>
    <source>
        <strain>ATCC 24698 / 74-OR23-1A / CBS 708.71 / DSM 1257 / FGSC 987</strain>
    </source>
</reference>
<reference key="4">
    <citation type="journal article" date="1973" name="J. Biol. Chem.">
        <title>Properties of chorismate synthase in Neurospora crassa.</title>
        <authorList>
            <person name="Gaertner F.H."/>
            <person name="Cole K.W."/>
        </authorList>
    </citation>
    <scope>FUNCTION</scope>
    <scope>CATALYTIC ACTIVITY</scope>
    <scope>BIOPHYSICOCHEMICAL PROPERTIES</scope>
</reference>
<reference key="5">
    <citation type="journal article" date="1974" name="Arch. Biochem. Biophys.">
        <title>Chorismate synthase of Neurospora crassa: a flavoprotein.</title>
        <authorList>
            <person name="Welch G.R."/>
            <person name="Cole K.W."/>
            <person name="Gaertner F.H."/>
        </authorList>
    </citation>
    <scope>FUNCTION</scope>
    <scope>CATALYTIC ACTIVITY</scope>
</reference>
<reference key="6">
    <citation type="journal article" date="1988" name="Biochem. J.">
        <title>The overexpression, purification and complete amino acid sequence of chorismate synthase from Escherichia coli K12 and its comparison with the enzyme from Neurospora crassa.</title>
        <authorList>
            <person name="White P.J."/>
            <person name="Millar G."/>
            <person name="Coggins J.R."/>
        </authorList>
    </citation>
    <scope>FUNCTION</scope>
    <scope>SUBUNIT</scope>
</reference>
<reference key="7">
    <citation type="journal article" date="1994" name="Biochemistry">
        <title>Substrate analogs as mechanistic probes for the bifunctional chorismate synthase from Neurospora crassa.</title>
        <authorList>
            <person name="Lauhon C.T."/>
            <person name="Bartlett P.A."/>
        </authorList>
    </citation>
    <scope>FUNCTION</scope>
    <scope>CATALYTIC ACTIVITY</scope>
</reference>
<reference key="8">
    <citation type="journal article" date="1995" name="Biochemistry">
        <title>Observation of a secondary tritium isotope effect in the chorismate synthase reaction.</title>
        <authorList>
            <person name="Balasubramanian S."/>
            <person name="Coggins J.R."/>
            <person name="Abell C."/>
        </authorList>
    </citation>
    <scope>FUNCTION</scope>
    <scope>CATALYTIC ACTIVITY</scope>
</reference>
<reference key="9">
    <citation type="journal article" date="1996" name="Mol. Microbiol.">
        <title>Saccharomyces cerevisiae chorismate synthase has a flavin reductase activity.</title>
        <authorList>
            <person name="Henstrand J.M."/>
            <person name="Schaller A."/>
            <person name="Braun M."/>
            <person name="Amrhein N."/>
            <person name="Schmid J."/>
        </authorList>
    </citation>
    <scope>FUNCTION</scope>
    <scope>CATALYTIC ACTIVITY</scope>
    <scope>PATHWAY</scope>
</reference>
<reference key="10">
    <citation type="journal article" date="2000" name="Bioorg. Chem.">
        <title>A secondary beta deuterium kinetic isotope effect in the chorismate synthase reaction.</title>
        <authorList>
            <person name="Bornemann S."/>
            <person name="Theoclitou M.E."/>
            <person name="Brune M."/>
            <person name="Webb M.R."/>
            <person name="Thorneley R.N."/>
            <person name="Abell C."/>
        </authorList>
    </citation>
    <scope>FUNCTION</scope>
    <scope>CATALYTIC ACTIVITY</scope>
</reference>
<reference key="11">
    <citation type="journal article" date="2001" name="J. Biol. Chem.">
        <title>Spectroscopic and kinetic characterization of the bifunctional chorismate synthase from Neurospora crassa: evidence for a common binding site for 5-enolpyruvylshikimate 3-phosphate and NADPH.</title>
        <authorList>
            <person name="Kitzing K."/>
            <person name="Macheroux P."/>
            <person name="Amrhein N."/>
        </authorList>
    </citation>
    <scope>FUNCTION</scope>
    <scope>CATALYTIC ACTIVITY</scope>
    <scope>DOMAIN</scope>
</reference>
<reference key="12">
    <citation type="journal article" date="2007" name="Biochemistry">
        <title>Mutagenic analysis of an invariant aspartate residue in chorismate synthase supports its role as an active site base.</title>
        <authorList>
            <person name="Rauch G."/>
            <person name="Ehammer H."/>
            <person name="Bornemann S."/>
            <person name="Macheroux P."/>
        </authorList>
    </citation>
    <scope>FUNCTION</scope>
    <scope>MUTAGENESIS OF ASP-367</scope>
    <scope>ACTIVE SITE</scope>
    <scope>CATALYTIC ACTIVITY</scope>
    <scope>BIOPHYSICOCHEMICAL PROPERTIES</scope>
</reference>
<reference key="13">
    <citation type="journal article" date="2008" name="FEBS J.">
        <title>Replacement of two invariant serine residues in chorismate synthase provides evidence that a proton relay system is essential for intermediate formation and catalytic activity.</title>
        <authorList>
            <person name="Rauch G."/>
            <person name="Ehammer H."/>
            <person name="Bornemann S."/>
            <person name="Macheroux P."/>
        </authorList>
    </citation>
    <scope>FUNCTION</scope>
    <scope>CATALYTIC ACTIVITY</scope>
    <scope>BIOPHYSICOCHEMICAL PROPERTIES</scope>
    <scope>MUTAGENESIS OF SER-16 AND SER-127</scope>
</reference>
<reference key="14">
    <citation type="journal article" date="2004" name="J. Biol. Chem.">
        <title>Mechanism of chorismate synthase. Role of the two invariant histidine residues in the active site.</title>
        <authorList>
            <person name="Kitzing K."/>
            <person name="Auweter S."/>
            <person name="Amrhein N."/>
            <person name="Macheroux P."/>
        </authorList>
    </citation>
    <scope>FUNCTION</scope>
    <scope>CATALYTIC ACTIVITY</scope>
    <scope>ACTIVE SITE</scope>
    <scope>MUTAGENESIS OF HIS-17 AND HIS-106</scope>
</reference>
<organism>
    <name type="scientific">Neurospora crassa (strain ATCC 24698 / 74-OR23-1A / CBS 708.71 / DSM 1257 / FGSC 987)</name>
    <dbReference type="NCBI Taxonomy" id="367110"/>
    <lineage>
        <taxon>Eukaryota</taxon>
        <taxon>Fungi</taxon>
        <taxon>Dikarya</taxon>
        <taxon>Ascomycota</taxon>
        <taxon>Pezizomycotina</taxon>
        <taxon>Sordariomycetes</taxon>
        <taxon>Sordariomycetidae</taxon>
        <taxon>Sordariales</taxon>
        <taxon>Sordariaceae</taxon>
        <taxon>Neurospora</taxon>
    </lineage>
</organism>
<accession>Q12640</accession>
<accession>Q7SC33</accession>
<accession>Q9P3J3</accession>
<name>AROC_NEUCR</name>
<sequence>MSTFGHYFRVTTYGESHCKSVGCIVDGVPPGMELTEDDIQPQMTRRRPGQSAITTPRDEKDRVIIQSGTEFGVTLGTPIGMLVMNEDQRPKDYGNKTMDIYPRPSHADWTYLEKYGVKASSGGGRSSARETIGRVAAGAIAEKYLKLAYGVEIVAFVSSVGSEHLFPPTAEHPSPSTNPEFLKLVNSITRETVDSFLPVRCPDAEANKRMEDLITKFRDNHDSIGGTVTCVIRNVPSGLGEPAFDKLEAMLAHAMLSIPATKGFEVGSGFGGCEVPGSIHNDPFVSAENTEIPPSVAASGAARNGIPRPKLTTKTNFSGGIQGGISNGAPIYFRVGFKPAATIGQEQTTATYDGTSEGVLAAKGRHDPSVVPRAVPIVEAMAALVIMDAVLAQQARHTAKSLLPPLKQTINSGKDTVGNGVSENVQESDLAQ</sequence>
<gene>
    <name evidence="14" type="primary">aro-2</name>
    <name type="ORF">B7F21.10</name>
    <name type="ORF">NCU05420</name>
</gene>
<protein>
    <recommendedName>
        <fullName evidence="14">Chorismate synthase aro-2</fullName>
        <ecNumber evidence="3 4 6 8 9 12 13">1.5.1.38</ecNumber>
        <ecNumber evidence="2 3 8 9 11 12 13">4.2.3.5</ecNumber>
    </recommendedName>
    <alternativeName>
        <fullName evidence="14">5-enolpyruvylshikimate-3-phosphate phospholyase</fullName>
    </alternativeName>
</protein>
<keyword id="KW-0028">Amino-acid biosynthesis</keyword>
<keyword id="KW-0057">Aromatic amino acid biosynthesis</keyword>
<keyword id="KW-0285">Flavoprotein</keyword>
<keyword id="KW-0288">FMN</keyword>
<keyword id="KW-0456">Lyase</keyword>
<keyword id="KW-0511">Multifunctional enzyme</keyword>
<keyword id="KW-0521">NADP</keyword>
<keyword id="KW-0560">Oxidoreductase</keyword>
<keyword id="KW-1185">Reference proteome</keyword>
<keyword id="KW-0346">Stress response</keyword>
<proteinExistence type="evidence at protein level"/>
<dbReference type="EC" id="1.5.1.38" evidence="3 4 6 8 9 12 13"/>
<dbReference type="EC" id="4.2.3.5" evidence="2 3 8 9 11 12 13"/>
<dbReference type="EMBL" id="U25818">
    <property type="protein sequence ID" value="AAC49056.1"/>
    <property type="molecule type" value="mRNA"/>
</dbReference>
<dbReference type="EMBL" id="AL389901">
    <property type="protein sequence ID" value="CAB97473.1"/>
    <property type="molecule type" value="Genomic_DNA"/>
</dbReference>
<dbReference type="EMBL" id="CM002237">
    <property type="protein sequence ID" value="EAA34007.1"/>
    <property type="molecule type" value="Genomic_DNA"/>
</dbReference>
<dbReference type="PIR" id="T46725">
    <property type="entry name" value="T46725"/>
</dbReference>
<dbReference type="SMR" id="Q12640"/>
<dbReference type="FunCoup" id="Q12640">
    <property type="interactions" value="234"/>
</dbReference>
<dbReference type="STRING" id="367110.Q12640"/>
<dbReference type="PaxDb" id="5141-EFNCRP00000006557"/>
<dbReference type="EnsemblFungi" id="EAA34007">
    <property type="protein sequence ID" value="EAA34007"/>
    <property type="gene ID" value="NCU05420"/>
</dbReference>
<dbReference type="KEGG" id="ncr:NCU05420"/>
<dbReference type="VEuPathDB" id="FungiDB:NCU05420"/>
<dbReference type="HOGENOM" id="CLU_034547_0_1_1"/>
<dbReference type="InParanoid" id="Q12640"/>
<dbReference type="OMA" id="MLSINAV"/>
<dbReference type="OrthoDB" id="1721239at2759"/>
<dbReference type="BRENDA" id="4.2.3.5">
    <property type="organism ID" value="3627"/>
</dbReference>
<dbReference type="SABIO-RK" id="Q12640"/>
<dbReference type="UniPathway" id="UPA00053">
    <property type="reaction ID" value="UER00090"/>
</dbReference>
<dbReference type="Proteomes" id="UP000001805">
    <property type="component" value="Chromosome 6, Linkage Group II"/>
</dbReference>
<dbReference type="GO" id="GO:0005829">
    <property type="term" value="C:cytosol"/>
    <property type="evidence" value="ECO:0000318"/>
    <property type="project" value="GO_Central"/>
</dbReference>
<dbReference type="GO" id="GO:0004107">
    <property type="term" value="F:chorismate synthase activity"/>
    <property type="evidence" value="ECO:0000318"/>
    <property type="project" value="GO_Central"/>
</dbReference>
<dbReference type="GO" id="GO:0010181">
    <property type="term" value="F:FMN binding"/>
    <property type="evidence" value="ECO:0000318"/>
    <property type="project" value="GO_Central"/>
</dbReference>
<dbReference type="GO" id="GO:0052873">
    <property type="term" value="F:FMN reductase (NADPH) activity"/>
    <property type="evidence" value="ECO:0007669"/>
    <property type="project" value="RHEA"/>
</dbReference>
<dbReference type="GO" id="GO:0042602">
    <property type="term" value="F:riboflavin reductase (NADPH) activity"/>
    <property type="evidence" value="ECO:0007669"/>
    <property type="project" value="EnsemblFungi"/>
</dbReference>
<dbReference type="GO" id="GO:0008652">
    <property type="term" value="P:amino acid biosynthetic process"/>
    <property type="evidence" value="ECO:0007669"/>
    <property type="project" value="UniProtKB-KW"/>
</dbReference>
<dbReference type="GO" id="GO:0009073">
    <property type="term" value="P:aromatic amino acid family biosynthetic process"/>
    <property type="evidence" value="ECO:0000318"/>
    <property type="project" value="GO_Central"/>
</dbReference>
<dbReference type="GO" id="GO:0009423">
    <property type="term" value="P:chorismate biosynthetic process"/>
    <property type="evidence" value="ECO:0000318"/>
    <property type="project" value="GO_Central"/>
</dbReference>
<dbReference type="CDD" id="cd07304">
    <property type="entry name" value="Chorismate_synthase"/>
    <property type="match status" value="1"/>
</dbReference>
<dbReference type="FunFam" id="3.60.150.10:FF:000004">
    <property type="entry name" value="Chorismate synthase"/>
    <property type="match status" value="1"/>
</dbReference>
<dbReference type="Gene3D" id="3.60.150.10">
    <property type="entry name" value="Chorismate synthase AroC"/>
    <property type="match status" value="1"/>
</dbReference>
<dbReference type="HAMAP" id="MF_00300">
    <property type="entry name" value="Chorismate_synth"/>
    <property type="match status" value="1"/>
</dbReference>
<dbReference type="InterPro" id="IPR000453">
    <property type="entry name" value="Chorismate_synth"/>
</dbReference>
<dbReference type="InterPro" id="IPR035904">
    <property type="entry name" value="Chorismate_synth_AroC_sf"/>
</dbReference>
<dbReference type="InterPro" id="IPR020541">
    <property type="entry name" value="Chorismate_synthase_CS"/>
</dbReference>
<dbReference type="NCBIfam" id="TIGR00033">
    <property type="entry name" value="aroC"/>
    <property type="match status" value="1"/>
</dbReference>
<dbReference type="NCBIfam" id="NF003793">
    <property type="entry name" value="PRK05382.1"/>
    <property type="match status" value="1"/>
</dbReference>
<dbReference type="PANTHER" id="PTHR21085">
    <property type="entry name" value="CHORISMATE SYNTHASE"/>
    <property type="match status" value="1"/>
</dbReference>
<dbReference type="PANTHER" id="PTHR21085:SF0">
    <property type="entry name" value="CHORISMATE SYNTHASE"/>
    <property type="match status" value="1"/>
</dbReference>
<dbReference type="Pfam" id="PF01264">
    <property type="entry name" value="Chorismate_synt"/>
    <property type="match status" value="1"/>
</dbReference>
<dbReference type="PIRSF" id="PIRSF001456">
    <property type="entry name" value="Chorismate_synth"/>
    <property type="match status" value="1"/>
</dbReference>
<dbReference type="SUPFAM" id="SSF103263">
    <property type="entry name" value="Chorismate synthase, AroC"/>
    <property type="match status" value="1"/>
</dbReference>
<dbReference type="PROSITE" id="PS00787">
    <property type="entry name" value="CHORISMATE_SYNTHASE_1"/>
    <property type="match status" value="1"/>
</dbReference>
<dbReference type="PROSITE" id="PS00788">
    <property type="entry name" value="CHORISMATE_SYNTHASE_2"/>
    <property type="match status" value="1"/>
</dbReference>
<dbReference type="PROSITE" id="PS00789">
    <property type="entry name" value="CHORISMATE_SYNTHASE_3"/>
    <property type="match status" value="1"/>
</dbReference>
<feature type="chain" id="PRO_0000140702" description="Chorismate synthase aro-2">
    <location>
        <begin position="1"/>
        <end position="432"/>
    </location>
</feature>
<feature type="region of interest" description="Disordered" evidence="1">
    <location>
        <begin position="406"/>
        <end position="432"/>
    </location>
</feature>
<feature type="compositionally biased region" description="Polar residues" evidence="1">
    <location>
        <begin position="408"/>
        <end position="432"/>
    </location>
</feature>
<feature type="active site" evidence="4">
    <location>
        <position position="17"/>
    </location>
</feature>
<feature type="active site" evidence="4">
    <location>
        <position position="106"/>
    </location>
</feature>
<feature type="active site" evidence="5">
    <location>
        <position position="367"/>
    </location>
</feature>
<feature type="mutagenesis site" description="Does not affect the flavin reductase activity but reduces the chorismate synthase activity 70-fold." evidence="6">
    <original>S</original>
    <variation>A</variation>
    <location>
        <position position="16"/>
    </location>
</feature>
<feature type="mutagenesis site" description="Reduces the chorismate synthase activity 20-fold." evidence="4">
    <original>H</original>
    <variation>A</variation>
    <location>
        <position position="17"/>
    </location>
</feature>
<feature type="mutagenesis site" description="Reduces the chorismate synthase activity 10-fold." evidence="4">
    <original>H</original>
    <variation>A</variation>
    <location>
        <position position="106"/>
    </location>
</feature>
<feature type="mutagenesis site" description="Does not affect the flavin reductase activity but reduces the chorismate synthase activity 6-fold." evidence="6">
    <original>S</original>
    <variation>A</variation>
    <location>
        <position position="127"/>
    </location>
</feature>
<feature type="mutagenesis site" description="Does not affect substrate binding but stringly reduces the chorismate synthase activity." evidence="5">
    <original>D</original>
    <variation>A</variation>
    <variation>N</variation>
    <location>
        <position position="367"/>
    </location>
</feature>
<feature type="sequence conflict" description="In Ref. 1; AAC49056." evidence="15" ref="1">
    <original>R</original>
    <variation>P</variation>
    <location>
        <position position="89"/>
    </location>
</feature>
<feature type="sequence conflict" description="In Ref. 1; AAC49056." evidence="15" ref="1">
    <original>LA</original>
    <variation>PR</variation>
    <location>
        <begin position="147"/>
        <end position="148"/>
    </location>
</feature>
<feature type="sequence conflict" description="In Ref. 1; AAC49056." evidence="15" ref="1">
    <original>QQ</original>
    <variation>HE</variation>
    <location>
        <begin position="393"/>
        <end position="394"/>
    </location>
</feature>
<feature type="sequence conflict" description="In Ref. 1; AAC49056." evidence="15" ref="1">
    <original>H</original>
    <variation>V</variation>
    <location>
        <position position="397"/>
    </location>
</feature>
<comment type="function">
    <text evidence="2 3 4 5 6 8 9 10 11 12 13">Bifunctional chorismate synthase and flavin reductase that catalyzes the conversion of 5-enolpyruvylshikimate 3-phosphate (EPSP) to form chorismate, which is the last common intermediate in the synthesis of the three aromatic amino acids phenylalanine, tyrosine and tryptophan (PubMed:11034781, PubMed:11526120, PubMed:14668332, PubMed:17326665, PubMed:18279385, PubMed:4146266, PubMed:4155270, PubMed:7657620, PubMed:7819217, PubMed:7947820, PubMed:8971708). Acts also as a flavin reductase (FR) able to generate reduced flavin mononucleotide in the presence of NADPH (PubMed:11526120, PubMed:14668332, PubMed:18279385, PubMed:4146266, PubMed:4155270, PubMed:7947820, PubMed:8971708).</text>
</comment>
<comment type="catalytic activity">
    <reaction evidence="2 3 4 5 6 8 9 11 12 13">
        <text>5-O-(1-carboxyvinyl)-3-phosphoshikimate = chorismate + phosphate</text>
        <dbReference type="Rhea" id="RHEA:21020"/>
        <dbReference type="ChEBI" id="CHEBI:29748"/>
        <dbReference type="ChEBI" id="CHEBI:43474"/>
        <dbReference type="ChEBI" id="CHEBI:57701"/>
        <dbReference type="EC" id="4.2.3.5"/>
    </reaction>
    <physiologicalReaction direction="left-to-right" evidence="2 3 4 5 6 8 9 11 12 13">
        <dbReference type="Rhea" id="RHEA:21021"/>
    </physiologicalReaction>
</comment>
<comment type="catalytic activity">
    <reaction evidence="3 4 6 8 9 11 12 13">
        <text>FMNH2 + NADP(+) = FMN + NADPH + 2 H(+)</text>
        <dbReference type="Rhea" id="RHEA:21624"/>
        <dbReference type="ChEBI" id="CHEBI:15378"/>
        <dbReference type="ChEBI" id="CHEBI:57618"/>
        <dbReference type="ChEBI" id="CHEBI:57783"/>
        <dbReference type="ChEBI" id="CHEBI:58210"/>
        <dbReference type="ChEBI" id="CHEBI:58349"/>
        <dbReference type="EC" id="1.5.1.38"/>
    </reaction>
    <physiologicalReaction direction="right-to-left" evidence="3 4 6 8 9 11 12 13">
        <dbReference type="Rhea" id="RHEA:21626"/>
    </physiologicalReaction>
</comment>
<comment type="biophysicochemical properties">
    <kinetics>
        <KM evidence="8">10 uM for NADPH</KM>
        <text evidence="5 6">kcat is 0.87 sec(-1) for chorismate formation.</text>
    </kinetics>
    <phDependence>
        <text evidence="8">Optimum pH is 7.0-8.0.</text>
    </phDependence>
</comment>
<comment type="pathway">
    <text evidence="13">Metabolic intermediate biosynthesis; chorismate biosynthesis; chorismate from D-erythrose 4-phosphate and phosphoenolpyruvate: step 7/7.</text>
</comment>
<comment type="subunit">
    <text evidence="7">Homotetramer.</text>
</comment>
<comment type="domain">
    <text evidence="3">NADPH binds in or near the substrate (5-enolpyruvylshikimate 3-phosphate) binding site, suggesting that NADPH binding to bifunctional chorismate synthases is embedded in the general protein structure and a special NADPH binding domain is not required to generate the intrinsic oxidoreductase activity.</text>
</comment>
<comment type="similarity">
    <text evidence="15">Belongs to the chorismate synthase family.</text>
</comment>